<keyword id="KW-0067">ATP-binding</keyword>
<keyword id="KW-0418">Kinase</keyword>
<keyword id="KW-0441">Lipid A biosynthesis</keyword>
<keyword id="KW-0444">Lipid biosynthesis</keyword>
<keyword id="KW-0443">Lipid metabolism</keyword>
<keyword id="KW-0547">Nucleotide-binding</keyword>
<keyword id="KW-0808">Transferase</keyword>
<feature type="chain" id="PRO_1000080468" description="Tetraacyldisaccharide 4'-kinase">
    <location>
        <begin position="1"/>
        <end position="322"/>
    </location>
</feature>
<feature type="binding site" evidence="1">
    <location>
        <begin position="54"/>
        <end position="61"/>
    </location>
    <ligand>
        <name>ATP</name>
        <dbReference type="ChEBI" id="CHEBI:30616"/>
    </ligand>
</feature>
<name>LPXK_FRATF</name>
<comment type="function">
    <text evidence="1">Transfers the gamma-phosphate of ATP to the 4'-position of a tetraacyldisaccharide 1-phosphate intermediate (termed DS-1-P) to form tetraacyldisaccharide 1,4'-bis-phosphate (lipid IVA).</text>
</comment>
<comment type="catalytic activity">
    <reaction evidence="1">
        <text>a lipid A disaccharide + ATP = a lipid IVA + ADP + H(+)</text>
        <dbReference type="Rhea" id="RHEA:67840"/>
        <dbReference type="ChEBI" id="CHEBI:15378"/>
        <dbReference type="ChEBI" id="CHEBI:30616"/>
        <dbReference type="ChEBI" id="CHEBI:176343"/>
        <dbReference type="ChEBI" id="CHEBI:176425"/>
        <dbReference type="ChEBI" id="CHEBI:456216"/>
        <dbReference type="EC" id="2.7.1.130"/>
    </reaction>
</comment>
<comment type="pathway">
    <text evidence="1">Glycolipid biosynthesis; lipid IV(A) biosynthesis; lipid IV(A) from (3R)-3-hydroxytetradecanoyl-[acyl-carrier-protein] and UDP-N-acetyl-alpha-D-glucosamine: step 6/6.</text>
</comment>
<comment type="similarity">
    <text evidence="1">Belongs to the LpxK family.</text>
</comment>
<organism>
    <name type="scientific">Francisella tularensis subsp. holarctica (strain FTNF002-00 / FTA)</name>
    <dbReference type="NCBI Taxonomy" id="458234"/>
    <lineage>
        <taxon>Bacteria</taxon>
        <taxon>Pseudomonadati</taxon>
        <taxon>Pseudomonadota</taxon>
        <taxon>Gammaproteobacteria</taxon>
        <taxon>Thiotrichales</taxon>
        <taxon>Francisellaceae</taxon>
        <taxon>Francisella</taxon>
    </lineage>
</organism>
<accession>A7NE36</accession>
<gene>
    <name evidence="1" type="primary">lpxK</name>
    <name type="ordered locus">FTA_1764</name>
</gene>
<evidence type="ECO:0000255" key="1">
    <source>
        <dbReference type="HAMAP-Rule" id="MF_00409"/>
    </source>
</evidence>
<proteinExistence type="inferred from homology"/>
<sequence>MLDKIWYRSKPNLLSRVLQPISLVFIDIANKRKIKQQLKQYKSKIPIIVVGNISVGGTGKTPVVRMLVQQYLAQDKKPAIISRGYGAKADNYPFEVTSGTLATQCGDEPAMLFDALQAQVPIVIAPERVQAVKYIEKNFPDTDIIMSDDGLQHYKLARDKEIVVVDAIRMFGNKLCLPAGPLREPIERLKEVDQIIVIGNCSDKDKELLKNYKNVTYAKVVATEFVNILTAKKVAKTEFNHQNAIAIAGIGNPTKFFKTLEESAINITAKKVFKDHHKFTQSDFEGIDSDITVVMTYKDAIKCKNFAKANWWYLDIALDINV</sequence>
<protein>
    <recommendedName>
        <fullName evidence="1">Tetraacyldisaccharide 4'-kinase</fullName>
        <ecNumber evidence="1">2.7.1.130</ecNumber>
    </recommendedName>
    <alternativeName>
        <fullName evidence="1">Lipid A 4'-kinase</fullName>
    </alternativeName>
</protein>
<reference key="1">
    <citation type="journal article" date="2009" name="PLoS ONE">
        <title>Complete genome sequence of Francisella tularensis subspecies holarctica FTNF002-00.</title>
        <authorList>
            <person name="Barabote R.D."/>
            <person name="Xie G."/>
            <person name="Brettin T.S."/>
            <person name="Hinrichs S.H."/>
            <person name="Fey P.D."/>
            <person name="Jay J.J."/>
            <person name="Engle J.L."/>
            <person name="Godbole S.D."/>
            <person name="Noronha J.M."/>
            <person name="Scheuermann R.H."/>
            <person name="Zhou L.W."/>
            <person name="Lion C."/>
            <person name="Dempsey M.P."/>
        </authorList>
    </citation>
    <scope>NUCLEOTIDE SEQUENCE [LARGE SCALE GENOMIC DNA]</scope>
    <source>
        <strain>FTNF002-00 / FTA</strain>
    </source>
</reference>
<dbReference type="EC" id="2.7.1.130" evidence="1"/>
<dbReference type="EMBL" id="CP000803">
    <property type="protein sequence ID" value="ABU62239.2"/>
    <property type="molecule type" value="Genomic_DNA"/>
</dbReference>
<dbReference type="RefSeq" id="WP_003017106.1">
    <property type="nucleotide sequence ID" value="NC_009749.1"/>
</dbReference>
<dbReference type="SMR" id="A7NE36"/>
<dbReference type="KEGG" id="fta:FTA_1764"/>
<dbReference type="HOGENOM" id="CLU_038816_2_0_6"/>
<dbReference type="UniPathway" id="UPA00359">
    <property type="reaction ID" value="UER00482"/>
</dbReference>
<dbReference type="GO" id="GO:0005886">
    <property type="term" value="C:plasma membrane"/>
    <property type="evidence" value="ECO:0007669"/>
    <property type="project" value="TreeGrafter"/>
</dbReference>
<dbReference type="GO" id="GO:0005524">
    <property type="term" value="F:ATP binding"/>
    <property type="evidence" value="ECO:0007669"/>
    <property type="project" value="UniProtKB-UniRule"/>
</dbReference>
<dbReference type="GO" id="GO:0009029">
    <property type="term" value="F:tetraacyldisaccharide 4'-kinase activity"/>
    <property type="evidence" value="ECO:0007669"/>
    <property type="project" value="UniProtKB-UniRule"/>
</dbReference>
<dbReference type="GO" id="GO:0009245">
    <property type="term" value="P:lipid A biosynthetic process"/>
    <property type="evidence" value="ECO:0007669"/>
    <property type="project" value="UniProtKB-UniRule"/>
</dbReference>
<dbReference type="GO" id="GO:0009244">
    <property type="term" value="P:lipopolysaccharide core region biosynthetic process"/>
    <property type="evidence" value="ECO:0007669"/>
    <property type="project" value="TreeGrafter"/>
</dbReference>
<dbReference type="HAMAP" id="MF_00409">
    <property type="entry name" value="LpxK"/>
    <property type="match status" value="1"/>
</dbReference>
<dbReference type="InterPro" id="IPR003758">
    <property type="entry name" value="LpxK"/>
</dbReference>
<dbReference type="InterPro" id="IPR027417">
    <property type="entry name" value="P-loop_NTPase"/>
</dbReference>
<dbReference type="NCBIfam" id="TIGR00682">
    <property type="entry name" value="lpxK"/>
    <property type="match status" value="1"/>
</dbReference>
<dbReference type="PANTHER" id="PTHR42724">
    <property type="entry name" value="TETRAACYLDISACCHARIDE 4'-KINASE"/>
    <property type="match status" value="1"/>
</dbReference>
<dbReference type="PANTHER" id="PTHR42724:SF1">
    <property type="entry name" value="TETRAACYLDISACCHARIDE 4'-KINASE, MITOCHONDRIAL-RELATED"/>
    <property type="match status" value="1"/>
</dbReference>
<dbReference type="Pfam" id="PF02606">
    <property type="entry name" value="LpxK"/>
    <property type="match status" value="1"/>
</dbReference>
<dbReference type="SUPFAM" id="SSF52540">
    <property type="entry name" value="P-loop containing nucleoside triphosphate hydrolases"/>
    <property type="match status" value="1"/>
</dbReference>